<gene>
    <name evidence="1" type="primary">ccsA</name>
    <name type="ORF">9311167</name>
</gene>
<reference key="1">
    <citation type="journal article" date="2004" name="Plant Physiol.">
        <title>A comparison of rice chloroplast genomes.</title>
        <authorList>
            <person name="Tang J."/>
            <person name="Xia H."/>
            <person name="Cao M."/>
            <person name="Zhang X."/>
            <person name="Zeng W."/>
            <person name="Hu S."/>
            <person name="Tong W."/>
            <person name="Wang J."/>
            <person name="Wang J."/>
            <person name="Yu J."/>
            <person name="Yang H."/>
            <person name="Zhu L."/>
        </authorList>
    </citation>
    <scope>NUCLEOTIDE SEQUENCE [LARGE SCALE GENOMIC DNA]</scope>
    <source>
        <strain>cv. 93-11</strain>
    </source>
</reference>
<sequence length="321" mass="36728">MLFATLEHILTHISFSTISIVITIHLITLLVRELGGLRDSSEKGMIATFFCITGFLVSRWASSGHFPLSNLYESLIFLSWALYILHMIPKIQNSKNDLSTITTPSTILTQGFATSGLLTEMHQSTILVPALQSQWLMMHVSMMLLSYATLLCGSLLSAALLMIRFRKNLDFFSKKKKNVLLKTFFFNEIEYFYAKRSALKSTFFPLFPNYYKYQLIERLDSWSYRVISLGFTLLTIGILCGAVWANEAWGSYWNWDPKETWAFITWTIFAIYLHSRTNPNWKGTKSAFVASIGFLIIWICYFGINLLGIGLHSYGSFTLPI</sequence>
<geneLocation type="chloroplast"/>
<accession>P0C376</accession>
<accession>P12215</accession>
<accession>Q6QXR2</accession>
<accession>Q6QY38</accession>
<comment type="function">
    <text evidence="1">Required during biogenesis of c-type cytochromes (cytochrome c6 and cytochrome f) at the step of heme attachment.</text>
</comment>
<comment type="subunit">
    <text evidence="1">May interact with Ccs1.</text>
</comment>
<comment type="subcellular location">
    <subcellularLocation>
        <location evidence="1">Plastid</location>
        <location evidence="1">Chloroplast thylakoid membrane</location>
        <topology evidence="1">Multi-pass membrane protein</topology>
    </subcellularLocation>
</comment>
<comment type="similarity">
    <text evidence="1">Belongs to the CcmF/CycK/Ccl1/NrfE/CcsA family.</text>
</comment>
<comment type="sequence caution" evidence="2">
    <conflict type="erroneous initiation">
        <sequence resource="EMBL-CDS" id="AAS46091"/>
    </conflict>
    <text>Truncated N-terminus.</text>
</comment>
<evidence type="ECO:0000255" key="1">
    <source>
        <dbReference type="HAMAP-Rule" id="MF_01391"/>
    </source>
</evidence>
<evidence type="ECO:0000305" key="2"/>
<keyword id="KW-0150">Chloroplast</keyword>
<keyword id="KW-0201">Cytochrome c-type biogenesis</keyword>
<keyword id="KW-0472">Membrane</keyword>
<keyword id="KW-0934">Plastid</keyword>
<keyword id="KW-1185">Reference proteome</keyword>
<keyword id="KW-0793">Thylakoid</keyword>
<keyword id="KW-0812">Transmembrane</keyword>
<keyword id="KW-1133">Transmembrane helix</keyword>
<protein>
    <recommendedName>
        <fullName evidence="1">Cytochrome c biogenesis protein CcsA</fullName>
    </recommendedName>
</protein>
<name>CCSA_ORYSI</name>
<feature type="chain" id="PRO_0000289028" description="Cytochrome c biogenesis protein CcsA">
    <location>
        <begin position="1"/>
        <end position="321"/>
    </location>
</feature>
<feature type="transmembrane region" description="Helical" evidence="1">
    <location>
        <begin position="9"/>
        <end position="29"/>
    </location>
</feature>
<feature type="transmembrane region" description="Helical" evidence="1">
    <location>
        <begin position="44"/>
        <end position="64"/>
    </location>
</feature>
<feature type="transmembrane region" description="Helical" evidence="1">
    <location>
        <begin position="68"/>
        <end position="88"/>
    </location>
</feature>
<feature type="transmembrane region" description="Helical" evidence="1">
    <location>
        <begin position="143"/>
        <end position="163"/>
    </location>
</feature>
<feature type="transmembrane region" description="Helical" evidence="1">
    <location>
        <begin position="226"/>
        <end position="246"/>
    </location>
</feature>
<feature type="transmembrane region" description="Helical" evidence="1">
    <location>
        <begin position="260"/>
        <end position="274"/>
    </location>
</feature>
<feature type="transmembrane region" description="Helical" evidence="1">
    <location>
        <begin position="289"/>
        <end position="309"/>
    </location>
</feature>
<dbReference type="EMBL" id="AY522329">
    <property type="protein sequence ID" value="AAS46091.1"/>
    <property type="status" value="ALT_INIT"/>
    <property type="molecule type" value="Genomic_DNA"/>
</dbReference>
<dbReference type="RefSeq" id="YP_654251.2">
    <property type="nucleotide sequence ID" value="NC_008155.1"/>
</dbReference>
<dbReference type="SMR" id="P0C376"/>
<dbReference type="STRING" id="39946.P0C376"/>
<dbReference type="GeneID" id="4126875"/>
<dbReference type="Proteomes" id="UP000007015">
    <property type="component" value="Chloroplast"/>
</dbReference>
<dbReference type="GO" id="GO:0009535">
    <property type="term" value="C:chloroplast thylakoid membrane"/>
    <property type="evidence" value="ECO:0007669"/>
    <property type="project" value="UniProtKB-SubCell"/>
</dbReference>
<dbReference type="GO" id="GO:0005886">
    <property type="term" value="C:plasma membrane"/>
    <property type="evidence" value="ECO:0007669"/>
    <property type="project" value="TreeGrafter"/>
</dbReference>
<dbReference type="GO" id="GO:0009536">
    <property type="term" value="C:plastid"/>
    <property type="evidence" value="ECO:0000305"/>
    <property type="project" value="Gramene"/>
</dbReference>
<dbReference type="GO" id="GO:0020037">
    <property type="term" value="F:heme binding"/>
    <property type="evidence" value="ECO:0007669"/>
    <property type="project" value="InterPro"/>
</dbReference>
<dbReference type="GO" id="GO:0017004">
    <property type="term" value="P:cytochrome complex assembly"/>
    <property type="evidence" value="ECO:0007669"/>
    <property type="project" value="UniProtKB-UniRule"/>
</dbReference>
<dbReference type="HAMAP" id="MF_01391">
    <property type="entry name" value="CytC_CcsA"/>
    <property type="match status" value="1"/>
</dbReference>
<dbReference type="InterPro" id="IPR002541">
    <property type="entry name" value="Cyt_c_assembly"/>
</dbReference>
<dbReference type="InterPro" id="IPR017562">
    <property type="entry name" value="Cyt_c_biogenesis_CcsA"/>
</dbReference>
<dbReference type="InterPro" id="IPR045062">
    <property type="entry name" value="Cyt_c_biogenesis_CcsA/CcmC"/>
</dbReference>
<dbReference type="NCBIfam" id="TIGR03144">
    <property type="entry name" value="cytochr_II_ccsB"/>
    <property type="match status" value="1"/>
</dbReference>
<dbReference type="PANTHER" id="PTHR30071:SF1">
    <property type="entry name" value="CYTOCHROME B_B6 PROTEIN-RELATED"/>
    <property type="match status" value="1"/>
</dbReference>
<dbReference type="PANTHER" id="PTHR30071">
    <property type="entry name" value="HEME EXPORTER PROTEIN C"/>
    <property type="match status" value="1"/>
</dbReference>
<dbReference type="Pfam" id="PF01578">
    <property type="entry name" value="Cytochrom_C_asm"/>
    <property type="match status" value="1"/>
</dbReference>
<proteinExistence type="inferred from homology"/>
<organism>
    <name type="scientific">Oryza sativa subsp. indica</name>
    <name type="common">Rice</name>
    <dbReference type="NCBI Taxonomy" id="39946"/>
    <lineage>
        <taxon>Eukaryota</taxon>
        <taxon>Viridiplantae</taxon>
        <taxon>Streptophyta</taxon>
        <taxon>Embryophyta</taxon>
        <taxon>Tracheophyta</taxon>
        <taxon>Spermatophyta</taxon>
        <taxon>Magnoliopsida</taxon>
        <taxon>Liliopsida</taxon>
        <taxon>Poales</taxon>
        <taxon>Poaceae</taxon>
        <taxon>BOP clade</taxon>
        <taxon>Oryzoideae</taxon>
        <taxon>Oryzeae</taxon>
        <taxon>Oryzinae</taxon>
        <taxon>Oryza</taxon>
        <taxon>Oryza sativa</taxon>
    </lineage>
</organism>